<reference key="1">
    <citation type="journal article" date="2008" name="DNA Res.">
        <title>Complete genome sequence and comparative analysis of the wild-type commensal Escherichia coli strain SE11 isolated from a healthy adult.</title>
        <authorList>
            <person name="Oshima K."/>
            <person name="Toh H."/>
            <person name="Ogura Y."/>
            <person name="Sasamoto H."/>
            <person name="Morita H."/>
            <person name="Park S.-H."/>
            <person name="Ooka T."/>
            <person name="Iyoda S."/>
            <person name="Taylor T.D."/>
            <person name="Hayashi T."/>
            <person name="Itoh K."/>
            <person name="Hattori M."/>
        </authorList>
    </citation>
    <scope>NUCLEOTIDE SEQUENCE [LARGE SCALE GENOMIC DNA]</scope>
    <source>
        <strain>SE11</strain>
    </source>
</reference>
<feature type="chain" id="PRO_1000136142" description="Protein TsgA">
    <location>
        <begin position="1"/>
        <end position="393"/>
    </location>
</feature>
<feature type="transmembrane region" description="Helical" evidence="1">
    <location>
        <begin position="11"/>
        <end position="31"/>
    </location>
</feature>
<feature type="transmembrane region" description="Helical" evidence="1">
    <location>
        <begin position="51"/>
        <end position="71"/>
    </location>
</feature>
<feature type="transmembrane region" description="Helical" evidence="1">
    <location>
        <begin position="78"/>
        <end position="98"/>
    </location>
</feature>
<feature type="transmembrane region" description="Helical" evidence="1">
    <location>
        <begin position="101"/>
        <end position="121"/>
    </location>
</feature>
<feature type="transmembrane region" description="Helical" evidence="1">
    <location>
        <begin position="134"/>
        <end position="154"/>
    </location>
</feature>
<feature type="transmembrane region" description="Helical" evidence="1">
    <location>
        <begin position="162"/>
        <end position="182"/>
    </location>
</feature>
<feature type="transmembrane region" description="Helical" evidence="1">
    <location>
        <begin position="206"/>
        <end position="226"/>
    </location>
</feature>
<feature type="transmembrane region" description="Helical" evidence="1">
    <location>
        <begin position="245"/>
        <end position="265"/>
    </location>
</feature>
<feature type="transmembrane region" description="Helical" evidence="1">
    <location>
        <begin position="273"/>
        <end position="293"/>
    </location>
</feature>
<feature type="transmembrane region" description="Helical" evidence="1">
    <location>
        <begin position="297"/>
        <end position="317"/>
    </location>
</feature>
<feature type="transmembrane region" description="Helical" evidence="1">
    <location>
        <begin position="332"/>
        <end position="352"/>
    </location>
</feature>
<feature type="transmembrane region" description="Helical" evidence="1">
    <location>
        <begin position="361"/>
        <end position="381"/>
    </location>
</feature>
<dbReference type="EMBL" id="AP009240">
    <property type="protein sequence ID" value="BAG79150.1"/>
    <property type="molecule type" value="Genomic_DNA"/>
</dbReference>
<dbReference type="RefSeq" id="WP_000185247.1">
    <property type="nucleotide sequence ID" value="NC_011415.1"/>
</dbReference>
<dbReference type="SMR" id="B6I2S3"/>
<dbReference type="GeneID" id="75206308"/>
<dbReference type="KEGG" id="ecy:ECSE_3626"/>
<dbReference type="HOGENOM" id="CLU_056916_0_0_6"/>
<dbReference type="Proteomes" id="UP000008199">
    <property type="component" value="Chromosome"/>
</dbReference>
<dbReference type="GO" id="GO:0005886">
    <property type="term" value="C:plasma membrane"/>
    <property type="evidence" value="ECO:0007669"/>
    <property type="project" value="UniProtKB-SubCell"/>
</dbReference>
<dbReference type="GO" id="GO:0022857">
    <property type="term" value="F:transmembrane transporter activity"/>
    <property type="evidence" value="ECO:0007669"/>
    <property type="project" value="InterPro"/>
</dbReference>
<dbReference type="CDD" id="cd17333">
    <property type="entry name" value="MFS_FucP_MFSD4_like"/>
    <property type="match status" value="1"/>
</dbReference>
<dbReference type="FunFam" id="1.20.1250.20:FF:000032">
    <property type="entry name" value="Protein TsgA"/>
    <property type="match status" value="1"/>
</dbReference>
<dbReference type="FunFam" id="1.20.1250.20:FF:000052">
    <property type="entry name" value="Protein TsgA"/>
    <property type="match status" value="1"/>
</dbReference>
<dbReference type="Gene3D" id="1.20.1250.20">
    <property type="entry name" value="MFS general substrate transporter like domains"/>
    <property type="match status" value="2"/>
</dbReference>
<dbReference type="HAMAP" id="MF_01044">
    <property type="entry name" value="MFS_TsgA"/>
    <property type="match status" value="1"/>
</dbReference>
<dbReference type="InterPro" id="IPR011701">
    <property type="entry name" value="MFS"/>
</dbReference>
<dbReference type="InterPro" id="IPR020846">
    <property type="entry name" value="MFS_dom"/>
</dbReference>
<dbReference type="InterPro" id="IPR036259">
    <property type="entry name" value="MFS_trans_sf"/>
</dbReference>
<dbReference type="InterPro" id="IPR023528">
    <property type="entry name" value="MFS_TsgA"/>
</dbReference>
<dbReference type="InterPro" id="IPR050375">
    <property type="entry name" value="MFS_TsgA-like"/>
</dbReference>
<dbReference type="NCBIfam" id="NF002982">
    <property type="entry name" value="PRK03699.1"/>
    <property type="match status" value="1"/>
</dbReference>
<dbReference type="PANTHER" id="PTHR43702">
    <property type="entry name" value="L-FUCOSE-PROTON SYMPORTER"/>
    <property type="match status" value="1"/>
</dbReference>
<dbReference type="PANTHER" id="PTHR43702:SF3">
    <property type="entry name" value="PROTEIN TSGA"/>
    <property type="match status" value="1"/>
</dbReference>
<dbReference type="Pfam" id="PF07690">
    <property type="entry name" value="MFS_1"/>
    <property type="match status" value="1"/>
</dbReference>
<dbReference type="SUPFAM" id="SSF103473">
    <property type="entry name" value="MFS general substrate transporter"/>
    <property type="match status" value="1"/>
</dbReference>
<dbReference type="PROSITE" id="PS50850">
    <property type="entry name" value="MFS"/>
    <property type="match status" value="1"/>
</dbReference>
<gene>
    <name evidence="1" type="primary">tsgA</name>
    <name type="ordered locus">ECSE_3626</name>
</gene>
<protein>
    <recommendedName>
        <fullName evidence="1">Protein TsgA</fullName>
    </recommendedName>
</protein>
<name>TSGA_ECOSE</name>
<evidence type="ECO:0000255" key="1">
    <source>
        <dbReference type="HAMAP-Rule" id="MF_01044"/>
    </source>
</evidence>
<organism>
    <name type="scientific">Escherichia coli (strain SE11)</name>
    <dbReference type="NCBI Taxonomy" id="409438"/>
    <lineage>
        <taxon>Bacteria</taxon>
        <taxon>Pseudomonadati</taxon>
        <taxon>Pseudomonadota</taxon>
        <taxon>Gammaproteobacteria</taxon>
        <taxon>Enterobacterales</taxon>
        <taxon>Enterobacteriaceae</taxon>
        <taxon>Escherichia</taxon>
    </lineage>
</organism>
<keyword id="KW-0997">Cell inner membrane</keyword>
<keyword id="KW-1003">Cell membrane</keyword>
<keyword id="KW-0472">Membrane</keyword>
<keyword id="KW-0812">Transmembrane</keyword>
<keyword id="KW-1133">Transmembrane helix</keyword>
<comment type="subcellular location">
    <subcellularLocation>
        <location evidence="1">Cell inner membrane</location>
        <topology evidence="1">Multi-pass membrane protein</topology>
    </subcellularLocation>
</comment>
<comment type="similarity">
    <text evidence="1">Belongs to the major facilitator superfamily. TsgA family.</text>
</comment>
<accession>B6I2S3</accession>
<proteinExistence type="inferred from homology"/>
<sequence length="393" mass="43166">MTNSNRIKLTWISFLSYALTGALVIVTGMVMGNIADYFNLPVSSMSNTFTFLNAGILISIFLNAWLMEIVPLKTQLRFGFLLMVLAVAGLMFSHSLALFSAAMFILGVVSGITMSIGTFLVTQMYEGRQRGSRLLFTDSFFSMAGMIFPMIAAFLLARSIEWYWVYACIGLVYVAIFILTFGCEFPALGKHAPKTDAPVEKEKWGIGVLFLSVAALCYILGQLGFISWVPEYAKGLGMSLNDAGTLVSNFWMSYMVGMWAFSFILRFFDLQRILTVLAGLAAILMYVFNTGTPAHMAWSILALGFFSSAIYTTIITLGSQQTKVPSPKLVNFVLTCGTIGTMLTFVVTGPIVEHSGPQAALLTANGLYAVVFVMCFLLGFVSRHRQHNTLTSH</sequence>